<keyword id="KW-0028">Amino-acid biosynthesis</keyword>
<keyword id="KW-0479">Metal-binding</keyword>
<keyword id="KW-0486">Methionine biosynthesis</keyword>
<keyword id="KW-0489">Methyltransferase</keyword>
<keyword id="KW-0677">Repeat</keyword>
<keyword id="KW-0808">Transferase</keyword>
<keyword id="KW-0862">Zinc</keyword>
<organism>
    <name type="scientific">Burkholderia ambifaria (strain ATCC BAA-244 / DSM 16087 / CCUG 44356 / LMG 19182 / AMMD)</name>
    <name type="common">Burkholderia cepacia (strain AMMD)</name>
    <dbReference type="NCBI Taxonomy" id="339670"/>
    <lineage>
        <taxon>Bacteria</taxon>
        <taxon>Pseudomonadati</taxon>
        <taxon>Pseudomonadota</taxon>
        <taxon>Betaproteobacteria</taxon>
        <taxon>Burkholderiales</taxon>
        <taxon>Burkholderiaceae</taxon>
        <taxon>Burkholderia</taxon>
        <taxon>Burkholderia cepacia complex</taxon>
    </lineage>
</organism>
<gene>
    <name evidence="1" type="primary">metE</name>
    <name type="ordered locus">Bamb_4646</name>
</gene>
<reference key="1">
    <citation type="submission" date="2006-08" db="EMBL/GenBank/DDBJ databases">
        <title>Complete sequence of chromosome 2 of Burkholderia cepacia AMMD.</title>
        <authorList>
            <person name="Copeland A."/>
            <person name="Lucas S."/>
            <person name="Lapidus A."/>
            <person name="Barry K."/>
            <person name="Detter J.C."/>
            <person name="Glavina del Rio T."/>
            <person name="Hammon N."/>
            <person name="Israni S."/>
            <person name="Pitluck S."/>
            <person name="Bruce D."/>
            <person name="Chain P."/>
            <person name="Malfatti S."/>
            <person name="Shin M."/>
            <person name="Vergez L."/>
            <person name="Schmutz J."/>
            <person name="Larimer F."/>
            <person name="Land M."/>
            <person name="Hauser L."/>
            <person name="Kyrpides N."/>
            <person name="Kim E."/>
            <person name="Parke J."/>
            <person name="Coenye T."/>
            <person name="Konstantinidis K."/>
            <person name="Ramette A."/>
            <person name="Tiedje J."/>
            <person name="Richardson P."/>
        </authorList>
    </citation>
    <scope>NUCLEOTIDE SEQUENCE [LARGE SCALE GENOMIC DNA]</scope>
    <source>
        <strain>ATCC BAA-244 / DSM 16087 / CCUG 44356 / LMG 19182 / AMMD</strain>
    </source>
</reference>
<sequence length="764" mass="84956">MVTTHNLGFPRIGAQRELKFGLERYWKGESSRDALKALGAELRARHWNAQRDLDLAPIGDFSFYDQVLDMSFTLGNLPKRVQGFHGDVLDNYFRVARGRSAQVVDEHGACCGGVSAGEMTKWFDTNYHYIVPEFHADTNFSLDPSCLLQQLAEARALGVAGKPVILGPVTYLWLGKEKDDSDRLALLPKLLPVYGALLDTLTAQGVEWVQIDEPILVTELDAEWRQALRTAYAALETRRIKLLLATYFGTLGDNLTLAASLPVDGLHVDAINARDEVDALVRELPADRVLSVGAINGRNIWKTDLNATLDWLEPLAKQLGDRLWIAPSCSLLHVPVDLASEEKLDAEIRSWLAFALQKLDELKVLATALNQGRDKVADALAANAAAIDSRRRSPRVNNPAVKAALARIDAQLGNRASPYTQRAPKQSARLNLPAFPTTTIGSFPQTADIRHARSQFKAGALDEAGYRAAMQAEIERSVREQESLGLDVLVHGEAERNDMVEYFGEQLDGYAFSQFGWVQSYGSRCVKPPILFGDISRPKAMTVEWITYAQSLTNKPMKGMLTGPVTILNWSFVRDDQPRSVSCYQLALAIRDEVLDLEKAGVRVIQIDEAALREGLPLRRAQWGEYLKWAVEAFRITANGVQDDTQIHTHMCYSEFNDIIASIADMDADVITIETSRSDMELLDAFDSFRYPNEIGPGVYDIHSPNIPTQDHIVGLMKKAAERIPAERLWVNPDCGLKTRQWAEVIPALTNMVAAAKTLRNQVQ</sequence>
<dbReference type="EC" id="2.1.1.14" evidence="1"/>
<dbReference type="EMBL" id="CP000441">
    <property type="protein sequence ID" value="ABI90196.1"/>
    <property type="molecule type" value="Genomic_DNA"/>
</dbReference>
<dbReference type="RefSeq" id="WP_011659606.1">
    <property type="nucleotide sequence ID" value="NC_008391.1"/>
</dbReference>
<dbReference type="SMR" id="Q0B6M7"/>
<dbReference type="GeneID" id="93087598"/>
<dbReference type="KEGG" id="bam:Bamb_4646"/>
<dbReference type="PATRIC" id="fig|339670.21.peg.4994"/>
<dbReference type="eggNOG" id="COG0620">
    <property type="taxonomic scope" value="Bacteria"/>
</dbReference>
<dbReference type="UniPathway" id="UPA00051">
    <property type="reaction ID" value="UER00082"/>
</dbReference>
<dbReference type="Proteomes" id="UP000000662">
    <property type="component" value="Chromosome 2"/>
</dbReference>
<dbReference type="GO" id="GO:0003871">
    <property type="term" value="F:5-methyltetrahydropteroyltriglutamate-homocysteine S-methyltransferase activity"/>
    <property type="evidence" value="ECO:0007669"/>
    <property type="project" value="UniProtKB-UniRule"/>
</dbReference>
<dbReference type="GO" id="GO:0008270">
    <property type="term" value="F:zinc ion binding"/>
    <property type="evidence" value="ECO:0007669"/>
    <property type="project" value="InterPro"/>
</dbReference>
<dbReference type="GO" id="GO:0009086">
    <property type="term" value="P:methionine biosynthetic process"/>
    <property type="evidence" value="ECO:0007669"/>
    <property type="project" value="UniProtKB-UniRule"/>
</dbReference>
<dbReference type="GO" id="GO:0032259">
    <property type="term" value="P:methylation"/>
    <property type="evidence" value="ECO:0007669"/>
    <property type="project" value="UniProtKB-KW"/>
</dbReference>
<dbReference type="CDD" id="cd03311">
    <property type="entry name" value="CIMS_C_terminal_like"/>
    <property type="match status" value="1"/>
</dbReference>
<dbReference type="CDD" id="cd03312">
    <property type="entry name" value="CIMS_N_terminal_like"/>
    <property type="match status" value="1"/>
</dbReference>
<dbReference type="FunFam" id="3.20.20.210:FF:000002">
    <property type="entry name" value="5-methyltetrahydropteroyltriglutamate--homocysteine methyltransferase"/>
    <property type="match status" value="1"/>
</dbReference>
<dbReference type="FunFam" id="3.20.20.210:FF:000003">
    <property type="entry name" value="5-methyltetrahydropteroyltriglutamate--homocysteine methyltransferase"/>
    <property type="match status" value="1"/>
</dbReference>
<dbReference type="Gene3D" id="3.20.20.210">
    <property type="match status" value="2"/>
</dbReference>
<dbReference type="HAMAP" id="MF_00172">
    <property type="entry name" value="Meth_synth"/>
    <property type="match status" value="1"/>
</dbReference>
<dbReference type="InterPro" id="IPR013215">
    <property type="entry name" value="Cbl-indep_Met_Synth_N"/>
</dbReference>
<dbReference type="InterPro" id="IPR006276">
    <property type="entry name" value="Cobalamin-indep_Met_synthase"/>
</dbReference>
<dbReference type="InterPro" id="IPR002629">
    <property type="entry name" value="Met_Synth_C/arc"/>
</dbReference>
<dbReference type="InterPro" id="IPR038071">
    <property type="entry name" value="UROD/MetE-like_sf"/>
</dbReference>
<dbReference type="NCBIfam" id="TIGR01371">
    <property type="entry name" value="met_syn_B12ind"/>
    <property type="match status" value="1"/>
</dbReference>
<dbReference type="NCBIfam" id="NF003556">
    <property type="entry name" value="PRK05222.1"/>
    <property type="match status" value="1"/>
</dbReference>
<dbReference type="PANTHER" id="PTHR30519">
    <property type="entry name" value="5-METHYLTETRAHYDROPTEROYLTRIGLUTAMATE--HOMOCYSTEINE METHYLTRANSFERASE"/>
    <property type="match status" value="1"/>
</dbReference>
<dbReference type="Pfam" id="PF08267">
    <property type="entry name" value="Meth_synt_1"/>
    <property type="match status" value="1"/>
</dbReference>
<dbReference type="Pfam" id="PF01717">
    <property type="entry name" value="Meth_synt_2"/>
    <property type="match status" value="1"/>
</dbReference>
<dbReference type="PIRSF" id="PIRSF000382">
    <property type="entry name" value="MeTrfase_B12_ind"/>
    <property type="match status" value="1"/>
</dbReference>
<dbReference type="SUPFAM" id="SSF51726">
    <property type="entry name" value="UROD/MetE-like"/>
    <property type="match status" value="2"/>
</dbReference>
<proteinExistence type="inferred from homology"/>
<protein>
    <recommendedName>
        <fullName evidence="1">5-methyltetrahydropteroyltriglutamate--homocysteine methyltransferase</fullName>
        <ecNumber evidence="1">2.1.1.14</ecNumber>
    </recommendedName>
    <alternativeName>
        <fullName evidence="1">Cobalamin-independent methionine synthase</fullName>
    </alternativeName>
    <alternativeName>
        <fullName evidence="1">Methionine synthase, vitamin-B12 independent isozyme</fullName>
    </alternativeName>
</protein>
<feature type="chain" id="PRO_1000017231" description="5-methyltetrahydropteroyltriglutamate--homocysteine methyltransferase">
    <location>
        <begin position="1"/>
        <end position="764"/>
    </location>
</feature>
<feature type="active site" description="Proton donor" evidence="1">
    <location>
        <position position="703"/>
    </location>
</feature>
<feature type="binding site" evidence="1">
    <location>
        <begin position="16"/>
        <end position="19"/>
    </location>
    <ligand>
        <name>5-methyltetrahydropteroyltri-L-glutamate</name>
        <dbReference type="ChEBI" id="CHEBI:58207"/>
    </ligand>
</feature>
<feature type="binding site" evidence="1">
    <location>
        <position position="121"/>
    </location>
    <ligand>
        <name>5-methyltetrahydropteroyltri-L-glutamate</name>
        <dbReference type="ChEBI" id="CHEBI:58207"/>
    </ligand>
</feature>
<feature type="binding site" evidence="1">
    <location>
        <begin position="440"/>
        <end position="442"/>
    </location>
    <ligand>
        <name>L-homocysteine</name>
        <dbReference type="ChEBI" id="CHEBI:58199"/>
    </ligand>
</feature>
<feature type="binding site" evidence="1">
    <location>
        <begin position="440"/>
        <end position="442"/>
    </location>
    <ligand>
        <name>L-methionine</name>
        <dbReference type="ChEBI" id="CHEBI:57844"/>
    </ligand>
</feature>
<feature type="binding site" evidence="1">
    <location>
        <position position="493"/>
    </location>
    <ligand>
        <name>L-homocysteine</name>
        <dbReference type="ChEBI" id="CHEBI:58199"/>
    </ligand>
</feature>
<feature type="binding site" evidence="1">
    <location>
        <position position="493"/>
    </location>
    <ligand>
        <name>L-methionine</name>
        <dbReference type="ChEBI" id="CHEBI:57844"/>
    </ligand>
</feature>
<feature type="binding site" evidence="1">
    <location>
        <begin position="524"/>
        <end position="525"/>
    </location>
    <ligand>
        <name>5-methyltetrahydropteroyltri-L-glutamate</name>
        <dbReference type="ChEBI" id="CHEBI:58207"/>
    </ligand>
</feature>
<feature type="binding site" evidence="1">
    <location>
        <position position="570"/>
    </location>
    <ligand>
        <name>5-methyltetrahydropteroyltri-L-glutamate</name>
        <dbReference type="ChEBI" id="CHEBI:58207"/>
    </ligand>
</feature>
<feature type="binding site" evidence="1">
    <location>
        <position position="608"/>
    </location>
    <ligand>
        <name>L-homocysteine</name>
        <dbReference type="ChEBI" id="CHEBI:58199"/>
    </ligand>
</feature>
<feature type="binding site" evidence="1">
    <location>
        <position position="608"/>
    </location>
    <ligand>
        <name>L-methionine</name>
        <dbReference type="ChEBI" id="CHEBI:57844"/>
    </ligand>
</feature>
<feature type="binding site" evidence="1">
    <location>
        <position position="614"/>
    </location>
    <ligand>
        <name>5-methyltetrahydropteroyltri-L-glutamate</name>
        <dbReference type="ChEBI" id="CHEBI:58207"/>
    </ligand>
</feature>
<feature type="binding site" evidence="1">
    <location>
        <position position="650"/>
    </location>
    <ligand>
        <name>Zn(2+)</name>
        <dbReference type="ChEBI" id="CHEBI:29105"/>
        <note>catalytic</note>
    </ligand>
</feature>
<feature type="binding site" evidence="1">
    <location>
        <position position="652"/>
    </location>
    <ligand>
        <name>Zn(2+)</name>
        <dbReference type="ChEBI" id="CHEBI:29105"/>
        <note>catalytic</note>
    </ligand>
</feature>
<feature type="binding site" evidence="1">
    <location>
        <position position="674"/>
    </location>
    <ligand>
        <name>Zn(2+)</name>
        <dbReference type="ChEBI" id="CHEBI:29105"/>
        <note>catalytic</note>
    </ligand>
</feature>
<feature type="binding site" evidence="1">
    <location>
        <position position="735"/>
    </location>
    <ligand>
        <name>Zn(2+)</name>
        <dbReference type="ChEBI" id="CHEBI:29105"/>
        <note>catalytic</note>
    </ligand>
</feature>
<accession>Q0B6M7</accession>
<comment type="function">
    <text evidence="1">Catalyzes the transfer of a methyl group from 5-methyltetrahydrofolate to homocysteine resulting in methionine formation.</text>
</comment>
<comment type="catalytic activity">
    <reaction evidence="1">
        <text>5-methyltetrahydropteroyltri-L-glutamate + L-homocysteine = tetrahydropteroyltri-L-glutamate + L-methionine</text>
        <dbReference type="Rhea" id="RHEA:21196"/>
        <dbReference type="ChEBI" id="CHEBI:57844"/>
        <dbReference type="ChEBI" id="CHEBI:58140"/>
        <dbReference type="ChEBI" id="CHEBI:58199"/>
        <dbReference type="ChEBI" id="CHEBI:58207"/>
        <dbReference type="EC" id="2.1.1.14"/>
    </reaction>
</comment>
<comment type="cofactor">
    <cofactor evidence="1">
        <name>Zn(2+)</name>
        <dbReference type="ChEBI" id="CHEBI:29105"/>
    </cofactor>
    <text evidence="1">Binds 1 zinc ion per subunit.</text>
</comment>
<comment type="pathway">
    <text evidence="1">Amino-acid biosynthesis; L-methionine biosynthesis via de novo pathway; L-methionine from L-homocysteine (MetE route): step 1/1.</text>
</comment>
<comment type="similarity">
    <text evidence="1">Belongs to the vitamin-B12 independent methionine synthase family.</text>
</comment>
<name>METE_BURCM</name>
<evidence type="ECO:0000255" key="1">
    <source>
        <dbReference type="HAMAP-Rule" id="MF_00172"/>
    </source>
</evidence>